<feature type="chain" id="PRO_1000096398" description="dCTP deaminase">
    <location>
        <begin position="1"/>
        <end position="189"/>
    </location>
</feature>
<feature type="active site" description="Proton donor/acceptor" evidence="1">
    <location>
        <position position="138"/>
    </location>
</feature>
<feature type="binding site" evidence="1">
    <location>
        <begin position="112"/>
        <end position="117"/>
    </location>
    <ligand>
        <name>dCTP</name>
        <dbReference type="ChEBI" id="CHEBI:61481"/>
    </ligand>
</feature>
<feature type="binding site" evidence="1">
    <location>
        <begin position="136"/>
        <end position="138"/>
    </location>
    <ligand>
        <name>dCTP</name>
        <dbReference type="ChEBI" id="CHEBI:61481"/>
    </ligand>
</feature>
<feature type="binding site" evidence="1">
    <location>
        <position position="157"/>
    </location>
    <ligand>
        <name>dCTP</name>
        <dbReference type="ChEBI" id="CHEBI:61481"/>
    </ligand>
</feature>
<feature type="binding site" evidence="1">
    <location>
        <position position="171"/>
    </location>
    <ligand>
        <name>dCTP</name>
        <dbReference type="ChEBI" id="CHEBI:61481"/>
    </ligand>
</feature>
<feature type="binding site" evidence="1">
    <location>
        <position position="181"/>
    </location>
    <ligand>
        <name>dCTP</name>
        <dbReference type="ChEBI" id="CHEBI:61481"/>
    </ligand>
</feature>
<protein>
    <recommendedName>
        <fullName evidence="1">dCTP deaminase</fullName>
        <ecNumber evidence="1">3.5.4.13</ecNumber>
    </recommendedName>
    <alternativeName>
        <fullName evidence="1">Deoxycytidine triphosphate deaminase</fullName>
    </alternativeName>
</protein>
<name>DCD_ACIBC</name>
<accession>B2HUI0</accession>
<sequence length="189" mass="21442">MAIKSDRWIREMSEKHGMIEPYAENQVRFDKNGEKLISYGVSSYGYDVRCAREFKVFTNVHSAIVDPKNFDEKSFIDIESDVCIIPPNSFALARTIEYFRIPRNVLTVCLGKSTYARCGIIVNVTPLEPEWEGHVTLEFSNTTNLPARIYAGEGVAQMLFFESDEVCETSYKDRGGKYQGQTGVTLPKT</sequence>
<comment type="function">
    <text evidence="1">Catalyzes the deamination of dCTP to dUTP.</text>
</comment>
<comment type="catalytic activity">
    <reaction evidence="1">
        <text>dCTP + H2O + H(+) = dUTP + NH4(+)</text>
        <dbReference type="Rhea" id="RHEA:22680"/>
        <dbReference type="ChEBI" id="CHEBI:15377"/>
        <dbReference type="ChEBI" id="CHEBI:15378"/>
        <dbReference type="ChEBI" id="CHEBI:28938"/>
        <dbReference type="ChEBI" id="CHEBI:61481"/>
        <dbReference type="ChEBI" id="CHEBI:61555"/>
        <dbReference type="EC" id="3.5.4.13"/>
    </reaction>
</comment>
<comment type="pathway">
    <text evidence="1">Pyrimidine metabolism; dUMP biosynthesis; dUMP from dCTP (dUTP route): step 1/2.</text>
</comment>
<comment type="subunit">
    <text evidence="1">Homotrimer.</text>
</comment>
<comment type="similarity">
    <text evidence="1">Belongs to the dCTP deaminase family.</text>
</comment>
<reference key="1">
    <citation type="journal article" date="2008" name="Antimicrob. Agents Chemother.">
        <title>Whole-genome pyrosequencing of an epidemic multidrug-resistant Acinetobacter baumannii strain belonging to the European clone II group.</title>
        <authorList>
            <person name="Iacono M."/>
            <person name="Villa L."/>
            <person name="Fortini D."/>
            <person name="Bordoni R."/>
            <person name="Imperi F."/>
            <person name="Bonnal R.J."/>
            <person name="Sicheritz-Ponten T."/>
            <person name="De Bellis G."/>
            <person name="Visca P."/>
            <person name="Cassone A."/>
            <person name="Carattoli A."/>
        </authorList>
    </citation>
    <scope>NUCLEOTIDE SEQUENCE [LARGE SCALE GENOMIC DNA]</scope>
    <source>
        <strain>ACICU</strain>
    </source>
</reference>
<dbReference type="EC" id="3.5.4.13" evidence="1"/>
<dbReference type="EMBL" id="CP000863">
    <property type="protein sequence ID" value="ACC56055.1"/>
    <property type="molecule type" value="Genomic_DNA"/>
</dbReference>
<dbReference type="RefSeq" id="WP_000985728.1">
    <property type="nucleotide sequence ID" value="NZ_CP031380.1"/>
</dbReference>
<dbReference type="SMR" id="B2HUI0"/>
<dbReference type="GeneID" id="92892716"/>
<dbReference type="KEGG" id="abc:ACICU_00743"/>
<dbReference type="HOGENOM" id="CLU_087476_4_0_6"/>
<dbReference type="UniPathway" id="UPA00610">
    <property type="reaction ID" value="UER00665"/>
</dbReference>
<dbReference type="Proteomes" id="UP000008839">
    <property type="component" value="Chromosome"/>
</dbReference>
<dbReference type="GO" id="GO:0008829">
    <property type="term" value="F:dCTP deaminase activity"/>
    <property type="evidence" value="ECO:0007669"/>
    <property type="project" value="UniProtKB-UniRule"/>
</dbReference>
<dbReference type="GO" id="GO:0000166">
    <property type="term" value="F:nucleotide binding"/>
    <property type="evidence" value="ECO:0007669"/>
    <property type="project" value="UniProtKB-KW"/>
</dbReference>
<dbReference type="GO" id="GO:0006226">
    <property type="term" value="P:dUMP biosynthetic process"/>
    <property type="evidence" value="ECO:0007669"/>
    <property type="project" value="UniProtKB-UniPathway"/>
</dbReference>
<dbReference type="GO" id="GO:0006229">
    <property type="term" value="P:dUTP biosynthetic process"/>
    <property type="evidence" value="ECO:0007669"/>
    <property type="project" value="UniProtKB-UniRule"/>
</dbReference>
<dbReference type="GO" id="GO:0015949">
    <property type="term" value="P:nucleobase-containing small molecule interconversion"/>
    <property type="evidence" value="ECO:0007669"/>
    <property type="project" value="TreeGrafter"/>
</dbReference>
<dbReference type="CDD" id="cd07557">
    <property type="entry name" value="trimeric_dUTPase"/>
    <property type="match status" value="1"/>
</dbReference>
<dbReference type="FunFam" id="2.70.40.10:FF:000001">
    <property type="entry name" value="dCTP deaminase"/>
    <property type="match status" value="1"/>
</dbReference>
<dbReference type="Gene3D" id="2.70.40.10">
    <property type="match status" value="1"/>
</dbReference>
<dbReference type="HAMAP" id="MF_00146">
    <property type="entry name" value="dCTP_deaminase"/>
    <property type="match status" value="1"/>
</dbReference>
<dbReference type="InterPro" id="IPR011962">
    <property type="entry name" value="dCTP_deaminase"/>
</dbReference>
<dbReference type="InterPro" id="IPR036157">
    <property type="entry name" value="dUTPase-like_sf"/>
</dbReference>
<dbReference type="InterPro" id="IPR033704">
    <property type="entry name" value="dUTPase_trimeric"/>
</dbReference>
<dbReference type="NCBIfam" id="TIGR02274">
    <property type="entry name" value="dCTP_deam"/>
    <property type="match status" value="1"/>
</dbReference>
<dbReference type="PANTHER" id="PTHR42680">
    <property type="entry name" value="DCTP DEAMINASE"/>
    <property type="match status" value="1"/>
</dbReference>
<dbReference type="PANTHER" id="PTHR42680:SF3">
    <property type="entry name" value="DCTP DEAMINASE"/>
    <property type="match status" value="1"/>
</dbReference>
<dbReference type="Pfam" id="PF22769">
    <property type="entry name" value="DCD"/>
    <property type="match status" value="1"/>
</dbReference>
<dbReference type="SUPFAM" id="SSF51283">
    <property type="entry name" value="dUTPase-like"/>
    <property type="match status" value="1"/>
</dbReference>
<keyword id="KW-0378">Hydrolase</keyword>
<keyword id="KW-0546">Nucleotide metabolism</keyword>
<keyword id="KW-0547">Nucleotide-binding</keyword>
<organism>
    <name type="scientific">Acinetobacter baumannii (strain ACICU)</name>
    <dbReference type="NCBI Taxonomy" id="405416"/>
    <lineage>
        <taxon>Bacteria</taxon>
        <taxon>Pseudomonadati</taxon>
        <taxon>Pseudomonadota</taxon>
        <taxon>Gammaproteobacteria</taxon>
        <taxon>Moraxellales</taxon>
        <taxon>Moraxellaceae</taxon>
        <taxon>Acinetobacter</taxon>
        <taxon>Acinetobacter calcoaceticus/baumannii complex</taxon>
    </lineage>
</organism>
<evidence type="ECO:0000255" key="1">
    <source>
        <dbReference type="HAMAP-Rule" id="MF_00146"/>
    </source>
</evidence>
<proteinExistence type="inferred from homology"/>
<gene>
    <name evidence="1" type="primary">dcd</name>
    <name type="ordered locus">ACICU_00743</name>
</gene>